<name>CLAMP_BPKVM</name>
<reference key="1">
    <citation type="journal article" date="2003" name="J. Bacteriol.">
        <title>Complete genome sequence of the broad-host-range vibriophage KVP40: comparative genomics of a T4-related bacteriophage.</title>
        <authorList>
            <person name="Miller E.S."/>
            <person name="Heidelberg J.F."/>
            <person name="Eisen J.A."/>
            <person name="Nelson W.C."/>
            <person name="Durkin A.S."/>
            <person name="Ciecko A."/>
            <person name="Feldblyum T.V."/>
            <person name="White O."/>
            <person name="Paulsen I.T."/>
            <person name="Nierman W.C."/>
            <person name="Lee J."/>
            <person name="Szczypinski B."/>
            <person name="Fraser C.M."/>
        </authorList>
    </citation>
    <scope>NUCLEOTIDE SEQUENCE [GENOMIC DNA]</scope>
    <source>
        <strain evidence="3">Isolate Vibrio parahaemolyticus/Japan/Matsuzaki /1991</strain>
    </source>
</reference>
<comment type="function">
    <text evidence="1">Sliding clamp that encircles the genomic DNA and links the DNA polymerase to the template to control the processivity of DNA synthesis. Responsible for tethering the catalytic subunit of DNA polymerase to DNA during high-speed replication. Interaction with the sliding-clamp-loader opens the sliding clamp so that it can be loaded around the DNA template. During transcription, encircles the DNA and tethers host RNA polymerase (RNAP) to it.</text>
</comment>
<comment type="subunit">
    <text evidence="1">Homotrimer. Interacts with the viral DNA polymerase; this interaction constitutes the polymerase holoenzyme. Interacts with the sliding-clamp-loader; this interaction allows the sliding-clamp-loader to open the sliding clamp. Interacts with the viral DNA ligase. Part of the replicase complex that includes the DNA polymerase, the polymerase clamp, the clamp loader complex, the single-stranded DNA binding protein, the primase, the helicase and the helicase assembly factor. Interacts with the viral RNA polymerase (RNAP). Part of the transcription activation complex containing host RNAP, the viral RNA polymerase sigma-like factor, the late transcription coactivator, and the sliding clamp.</text>
</comment>
<comment type="similarity">
    <text evidence="1">Belongs to the Tevenvirinae sliding clamp family.</text>
</comment>
<gene>
    <name evidence="2" type="primary">45</name>
    <name evidence="2" type="ORF">KVP40.0077</name>
</gene>
<protein>
    <recommendedName>
        <fullName evidence="1">Sliding clamp</fullName>
    </recommendedName>
    <alternativeName>
        <fullName evidence="1">DNA polymerase accessory protein Gp45</fullName>
    </alternativeName>
    <alternativeName>
        <fullName evidence="1">DNA polymerase clamp</fullName>
    </alternativeName>
    <alternativeName>
        <fullName>Gene product 45</fullName>
        <shortName>gp45</shortName>
    </alternativeName>
</protein>
<feature type="chain" id="PRO_0000431830" description="Sliding clamp">
    <location>
        <begin position="1"/>
        <end position="221"/>
    </location>
</feature>
<accession>Q6WI75</accession>
<proteinExistence type="inferred from homology"/>
<organism>
    <name type="scientific">Vibrio phage KVP40 (isolate Vibrio parahaemolyticus/Japan/Matsuzaki/1991)</name>
    <name type="common">KVP40</name>
    <name type="synonym">Bacteriophage KVP40</name>
    <dbReference type="NCBI Taxonomy" id="75320"/>
    <lineage>
        <taxon>Viruses</taxon>
        <taxon>Duplodnaviria</taxon>
        <taxon>Heunggongvirae</taxon>
        <taxon>Uroviricota</taxon>
        <taxon>Caudoviricetes</taxon>
        <taxon>Straboviridae</taxon>
        <taxon>Schizotequatrovirus</taxon>
        <taxon>Schizotequatrovirus KVP40</taxon>
    </lineage>
</organism>
<evidence type="ECO:0000255" key="1">
    <source>
        <dbReference type="HAMAP-Rule" id="MF_04161"/>
    </source>
</evidence>
<evidence type="ECO:0000312" key="2">
    <source>
        <dbReference type="EMBL" id="AAQ64148.1"/>
    </source>
</evidence>
<evidence type="ECO:0000312" key="3">
    <source>
        <dbReference type="Proteomes" id="UP000001785"/>
    </source>
</evidence>
<dbReference type="EMBL" id="AY283928">
    <property type="protein sequence ID" value="AAQ64148.1"/>
    <property type="molecule type" value="Genomic_DNA"/>
</dbReference>
<dbReference type="RefSeq" id="NP_899325.1">
    <property type="nucleotide sequence ID" value="NC_005083.2"/>
</dbReference>
<dbReference type="SMR" id="Q6WI75"/>
<dbReference type="GeneID" id="2545932"/>
<dbReference type="KEGG" id="vg:2545932"/>
<dbReference type="OrthoDB" id="7567at10239"/>
<dbReference type="Proteomes" id="UP000001785">
    <property type="component" value="Genome"/>
</dbReference>
<dbReference type="GO" id="GO:0030337">
    <property type="term" value="F:DNA polymerase processivity factor activity"/>
    <property type="evidence" value="ECO:0007669"/>
    <property type="project" value="UniProtKB-UniRule"/>
</dbReference>
<dbReference type="GO" id="GO:0006260">
    <property type="term" value="P:DNA replication"/>
    <property type="evidence" value="ECO:0007669"/>
    <property type="project" value="UniProtKB-KW"/>
</dbReference>
<dbReference type="GO" id="GO:0039693">
    <property type="term" value="P:viral DNA genome replication"/>
    <property type="evidence" value="ECO:0007669"/>
    <property type="project" value="UniProtKB-UniRule"/>
</dbReference>
<dbReference type="GO" id="GO:0019083">
    <property type="term" value="P:viral transcription"/>
    <property type="evidence" value="ECO:0007669"/>
    <property type="project" value="UniProtKB-UniRule"/>
</dbReference>
<dbReference type="Gene3D" id="3.70.10.10">
    <property type="match status" value="1"/>
</dbReference>
<dbReference type="HAMAP" id="MF_04161">
    <property type="entry name" value="Sliding_clamp_T4"/>
    <property type="match status" value="1"/>
</dbReference>
<dbReference type="InterPro" id="IPR046938">
    <property type="entry name" value="DNA_clamp_sf"/>
</dbReference>
<dbReference type="InterPro" id="IPR015200">
    <property type="entry name" value="Sliding_clamp_C"/>
</dbReference>
<dbReference type="InterPro" id="IPR046389">
    <property type="entry name" value="Sliding_clamp_T4"/>
</dbReference>
<dbReference type="Pfam" id="PF09116">
    <property type="entry name" value="gp45-slide_C"/>
    <property type="match status" value="1"/>
</dbReference>
<dbReference type="SUPFAM" id="SSF55979">
    <property type="entry name" value="DNA clamp"/>
    <property type="match status" value="2"/>
</dbReference>
<sequence>MKLNKSTIEVLKNFAGINNGMVIHAGSRIRTQDNLNKQIAYADIEDSFPVEFAVYDLGEFLSALNLLDNAELDFQEKFVVVTGDGGTKLTFQYANAEFVTEAPEKVNFPTELDGGAEFDLKGEDLQRVKKASATLGLSDICVRTEAGSTAITLSATDAQGSSKHTFEINVGEADVDTEFKFFFKSERLNIVDQDYKVSIHPAGISRFLGLSLEYFIATEAL</sequence>
<organismHost>
    <name type="scientific">Vibrio parahaemolyticus</name>
    <dbReference type="NCBI Taxonomy" id="670"/>
</organismHost>
<keyword id="KW-0235">DNA replication</keyword>
<keyword id="KW-1185">Reference proteome</keyword>
<keyword id="KW-1194">Viral DNA replication</keyword>
<keyword id="KW-1195">Viral transcription</keyword>